<comment type="function">
    <text evidence="1">Responsible for the release of ribosomes from messenger RNA at the termination of protein biosynthesis. May increase the efficiency of translation by recycling ribosomes from one round of translation to another.</text>
</comment>
<comment type="subcellular location">
    <subcellularLocation>
        <location evidence="1">Cytoplasm</location>
    </subcellularLocation>
</comment>
<comment type="similarity">
    <text evidence="1">Belongs to the RRF family.</text>
</comment>
<reference key="1">
    <citation type="journal article" date="2008" name="Environ. Microbiol.">
        <title>The complete genome sequence of Moorella thermoacetica (f. Clostridium thermoaceticum).</title>
        <authorList>
            <person name="Pierce E."/>
            <person name="Xie G."/>
            <person name="Barabote R.D."/>
            <person name="Saunders E."/>
            <person name="Han C.S."/>
            <person name="Detter J.C."/>
            <person name="Richardson P."/>
            <person name="Brettin T.S."/>
            <person name="Das A."/>
            <person name="Ljungdahl L.G."/>
            <person name="Ragsdale S.W."/>
        </authorList>
    </citation>
    <scope>NUCLEOTIDE SEQUENCE [LARGE SCALE GENOMIC DNA]</scope>
    <source>
        <strain>ATCC 39073 / JCM 9320</strain>
    </source>
</reference>
<evidence type="ECO:0000255" key="1">
    <source>
        <dbReference type="HAMAP-Rule" id="MF_00040"/>
    </source>
</evidence>
<evidence type="ECO:0000256" key="2">
    <source>
        <dbReference type="SAM" id="MobiDB-lite"/>
    </source>
</evidence>
<organism>
    <name type="scientific">Moorella thermoacetica (strain ATCC 39073 / JCM 9320)</name>
    <dbReference type="NCBI Taxonomy" id="264732"/>
    <lineage>
        <taxon>Bacteria</taxon>
        <taxon>Bacillati</taxon>
        <taxon>Bacillota</taxon>
        <taxon>Clostridia</taxon>
        <taxon>Moorellales</taxon>
        <taxon>Moorellaceae</taxon>
        <taxon>Moorella</taxon>
    </lineage>
</organism>
<feature type="chain" id="PRO_1000003197" description="Ribosome-recycling factor">
    <location>
        <begin position="1"/>
        <end position="185"/>
    </location>
</feature>
<feature type="region of interest" description="Disordered" evidence="2">
    <location>
        <begin position="135"/>
        <end position="159"/>
    </location>
</feature>
<sequence>MLADILQEAEEKMKKAVEGLRRELASLRAGRANPALLEKVLVSYYGTPTPVNQLATVSSPEARLLVIQPWDRNILPEIEKAILKSDLGLTPSSDGTVIRITIPQLTEERRSELVKVARKKAEEFRVMVRNARREANDKLKASEKNKEASEDEVKRAQEKVQKTTDNYIQIIDKILATKEAEIMEV</sequence>
<protein>
    <recommendedName>
        <fullName evidence="1">Ribosome-recycling factor</fullName>
        <shortName evidence="1">RRF</shortName>
    </recommendedName>
    <alternativeName>
        <fullName evidence="1">Ribosome-releasing factor</fullName>
    </alternativeName>
</protein>
<proteinExistence type="inferred from homology"/>
<accession>Q2RJP0</accession>
<dbReference type="EMBL" id="CP000232">
    <property type="protein sequence ID" value="ABC19349.1"/>
    <property type="molecule type" value="Genomic_DNA"/>
</dbReference>
<dbReference type="RefSeq" id="YP_429892.1">
    <property type="nucleotide sequence ID" value="NC_007644.1"/>
</dbReference>
<dbReference type="SMR" id="Q2RJP0"/>
<dbReference type="STRING" id="264732.Moth_1035"/>
<dbReference type="EnsemblBacteria" id="ABC19349">
    <property type="protein sequence ID" value="ABC19349"/>
    <property type="gene ID" value="Moth_1035"/>
</dbReference>
<dbReference type="KEGG" id="mta:Moth_1035"/>
<dbReference type="PATRIC" id="fig|264732.11.peg.1115"/>
<dbReference type="eggNOG" id="COG0233">
    <property type="taxonomic scope" value="Bacteria"/>
</dbReference>
<dbReference type="HOGENOM" id="CLU_073981_2_0_9"/>
<dbReference type="OrthoDB" id="9804006at2"/>
<dbReference type="GO" id="GO:0005737">
    <property type="term" value="C:cytoplasm"/>
    <property type="evidence" value="ECO:0007669"/>
    <property type="project" value="UniProtKB-SubCell"/>
</dbReference>
<dbReference type="GO" id="GO:0043023">
    <property type="term" value="F:ribosomal large subunit binding"/>
    <property type="evidence" value="ECO:0007669"/>
    <property type="project" value="TreeGrafter"/>
</dbReference>
<dbReference type="GO" id="GO:0006415">
    <property type="term" value="P:translational termination"/>
    <property type="evidence" value="ECO:0007669"/>
    <property type="project" value="UniProtKB-UniRule"/>
</dbReference>
<dbReference type="CDD" id="cd00520">
    <property type="entry name" value="RRF"/>
    <property type="match status" value="1"/>
</dbReference>
<dbReference type="FunFam" id="1.10.132.20:FF:000001">
    <property type="entry name" value="Ribosome-recycling factor"/>
    <property type="match status" value="1"/>
</dbReference>
<dbReference type="FunFam" id="3.30.1360.40:FF:000001">
    <property type="entry name" value="Ribosome-recycling factor"/>
    <property type="match status" value="1"/>
</dbReference>
<dbReference type="Gene3D" id="3.30.1360.40">
    <property type="match status" value="1"/>
</dbReference>
<dbReference type="Gene3D" id="1.10.132.20">
    <property type="entry name" value="Ribosome-recycling factor"/>
    <property type="match status" value="1"/>
</dbReference>
<dbReference type="HAMAP" id="MF_00040">
    <property type="entry name" value="RRF"/>
    <property type="match status" value="1"/>
</dbReference>
<dbReference type="InterPro" id="IPR002661">
    <property type="entry name" value="Ribosome_recyc_fac"/>
</dbReference>
<dbReference type="InterPro" id="IPR023584">
    <property type="entry name" value="Ribosome_recyc_fac_dom"/>
</dbReference>
<dbReference type="InterPro" id="IPR036191">
    <property type="entry name" value="RRF_sf"/>
</dbReference>
<dbReference type="NCBIfam" id="TIGR00496">
    <property type="entry name" value="frr"/>
    <property type="match status" value="1"/>
</dbReference>
<dbReference type="PANTHER" id="PTHR20982:SF3">
    <property type="entry name" value="MITOCHONDRIAL RIBOSOME RECYCLING FACTOR PSEUDO 1"/>
    <property type="match status" value="1"/>
</dbReference>
<dbReference type="PANTHER" id="PTHR20982">
    <property type="entry name" value="RIBOSOME RECYCLING FACTOR"/>
    <property type="match status" value="1"/>
</dbReference>
<dbReference type="Pfam" id="PF01765">
    <property type="entry name" value="RRF"/>
    <property type="match status" value="1"/>
</dbReference>
<dbReference type="SUPFAM" id="SSF55194">
    <property type="entry name" value="Ribosome recycling factor, RRF"/>
    <property type="match status" value="1"/>
</dbReference>
<keyword id="KW-0963">Cytoplasm</keyword>
<keyword id="KW-0648">Protein biosynthesis</keyword>
<name>RRF_MOOTA</name>
<gene>
    <name evidence="1" type="primary">frr</name>
    <name type="ordered locus">Moth_1035</name>
</gene>